<evidence type="ECO:0000269" key="1">
    <source>
    </source>
</evidence>
<evidence type="ECO:0000303" key="2">
    <source>
    </source>
</evidence>
<evidence type="ECO:0000305" key="3"/>
<evidence type="ECO:0000305" key="4">
    <source>
    </source>
</evidence>
<feature type="peptide" id="PRO_0000459136" description="Peptide Ppnp7" evidence="1">
    <location>
        <begin position="1"/>
        <end position="8"/>
    </location>
</feature>
<feature type="modified residue" description="Pyrrolidone carboxylic acid (Glu)" evidence="1">
    <location>
        <position position="1"/>
    </location>
</feature>
<feature type="unsure residue" description="E or Q" evidence="3">
    <location>
        <position position="1"/>
    </location>
</feature>
<feature type="unsure residue" description="Gln or Lys" evidence="1">
    <location>
        <position position="1"/>
    </location>
</feature>
<feature type="unsure residue" description="Gln or Lys" evidence="1">
    <location>
        <position position="4"/>
    </location>
</feature>
<feature type="unsure residue" description="Leu or Ile" evidence="1">
    <location>
        <position position="7"/>
    </location>
</feature>
<organism>
    <name type="scientific">Polybia paulista</name>
    <name type="common">Neotropical social wasp</name>
    <name type="synonym">Swarm-founding polistine wasp</name>
    <dbReference type="NCBI Taxonomy" id="291283"/>
    <lineage>
        <taxon>Eukaryota</taxon>
        <taxon>Metazoa</taxon>
        <taxon>Ecdysozoa</taxon>
        <taxon>Arthropoda</taxon>
        <taxon>Hexapoda</taxon>
        <taxon>Insecta</taxon>
        <taxon>Pterygota</taxon>
        <taxon>Neoptera</taxon>
        <taxon>Endopterygota</taxon>
        <taxon>Hymenoptera</taxon>
        <taxon>Apocrita</taxon>
        <taxon>Aculeata</taxon>
        <taxon>Vespoidea</taxon>
        <taxon>Vespidae</taxon>
        <taxon>Polistinae</taxon>
        <taxon>Epiponini</taxon>
        <taxon>Polybia</taxon>
    </lineage>
</organism>
<dbReference type="GO" id="GO:0005576">
    <property type="term" value="C:extracellular region"/>
    <property type="evidence" value="ECO:0007669"/>
    <property type="project" value="UniProtKB-SubCell"/>
</dbReference>
<name>PPNP7_POLPI</name>
<comment type="function">
    <text evidence="1">Peptide with unknown natural function. Protects against maximum seizures in a pentylenetetrazole (PTZ)-induced epileptic model. Acts in a dose-dependent manner when intracerebroventrically injected into mice and rats, but has no effect when intraperitoneally injected. Since it does not alter the spontaneous behaviors of the animals, neuropolybin could be considered for further research as a potential treatment for seizures.</text>
</comment>
<comment type="subcellular location">
    <subcellularLocation>
        <location evidence="1">Secreted</location>
    </subcellularLocation>
</comment>
<comment type="tissue specificity">
    <text evidence="4">Expressed by the venom gland.</text>
</comment>
<comment type="mass spectrometry" mass="1203.0" method="MALDI" evidence="1">
    <text>Monoisotopic mass.</text>
</comment>
<comment type="miscellaneous">
    <text evidence="4">Neuropolybin refers to the sequence pEQWQPQLHR, it is synthesized based on the inspiration drawn from the peptide Ppnp7, which contains uncertain residues.</text>
</comment>
<protein>
    <recommendedName>
        <fullName evidence="2">Peptide Ppnp7</fullName>
    </recommendedName>
    <alternativeName>
        <fullName evidence="2">Neuropolybin</fullName>
    </alternativeName>
</protein>
<sequence length="9" mass="1221">EQWQPQLHR</sequence>
<proteinExistence type="evidence at protein level"/>
<accession>P0DX55</accession>
<reference key="1">
    <citation type="journal article" date="2020" name="Biochem. Pharmacol.">
        <title>Neuropolybin: a new antiseizure peptide obtained from wasp venom.</title>
        <authorList>
            <person name="de Castro Silva J."/>
            <person name="Lopes do Couto L."/>
            <person name="de Oliveira Amaral H."/>
            <person name="Maria Medeiros Gomes F."/>
            <person name="Avohay Alves Campos G."/>
            <person name="Paulino Silva L."/>
            <person name="Renata Mortari M."/>
        </authorList>
    </citation>
    <scope>PROTEIN SEQUENCE</scope>
    <scope>FUNCTION</scope>
    <scope>BIOSSAY</scope>
    <scope>SUBCELLULAR LOCATION</scope>
    <scope>PYROGLUTAMATE FORMATION AT GLU-1</scope>
    <scope>SYNTHESIS</scope>
    <scope>MASS SPECTROMETRY</scope>
    <source>
        <tissue>Venom</tissue>
    </source>
</reference>
<keyword id="KW-0903">Direct protein sequencing</keyword>
<keyword id="KW-0873">Pyrrolidone carboxylic acid</keyword>
<keyword id="KW-0964">Secreted</keyword>